<gene>
    <name evidence="22" type="primary">Dnm1l</name>
    <name evidence="18" type="synonym">Dlp1</name>
    <name type="synonym">Drp1</name>
</gene>
<reference key="1">
    <citation type="journal article" date="1998" name="J. Cell Biol.">
        <title>A novel dynamin-like protein associates with cytoplasmic vesicles and tubules of the endoplasmic reticulum in mammalian cells.</title>
        <authorList>
            <person name="Yoon Y."/>
            <person name="Pitts K.R."/>
            <person name="Dahan S."/>
            <person name="McNiven M.A."/>
        </authorList>
    </citation>
    <scope>NUCLEOTIDE SEQUENCE [MRNA] (ISOFORMS 1; 2; 3; 4; 5 AND 6)</scope>
    <scope>PROTEIN SEQUENCE OF 39-48; 62-74; 113-126; 147-160; 174-180 AND 700-710</scope>
    <scope>SUBCELLULAR LOCATION</scope>
    <scope>TISSUE SPECIFICITY</scope>
    <source>
        <tissue>Brain</tissue>
        <tissue>Liver</tissue>
    </source>
</reference>
<reference key="2">
    <citation type="journal article" date="2000" name="Biochem. Biophys. Res. Commun.">
        <title>Three rat brain alternative splicing dynamin-like protein variants: interaction with the glycogen synthase kinase 3beta and action as a substrate.</title>
        <authorList>
            <person name="Chen C.-H."/>
            <person name="Hwang S.-L."/>
            <person name="Howng S.-L."/>
            <person name="Chou C.-K."/>
            <person name="Hong Y.-R."/>
        </authorList>
    </citation>
    <scope>NUCLEOTIDE SEQUENCE [MRNA] (ISOFORMS 1; 3 AND 5)</scope>
    <scope>TISSUE SPECIFICITY</scope>
    <scope>INTERACTION WITH GSK3B</scope>
    <source>
        <tissue>Brain</tissue>
    </source>
</reference>
<reference key="3">
    <citation type="journal article" date="2004" name="Genome Res.">
        <title>The status, quality, and expansion of the NIH full-length cDNA project: the Mammalian Gene Collection (MGC).</title>
        <authorList>
            <consortium name="The MGC Project Team"/>
        </authorList>
    </citation>
    <scope>NUCLEOTIDE SEQUENCE [LARGE SCALE MRNA] (ISOFORM 2)</scope>
    <source>
        <tissue>Testis</tissue>
    </source>
</reference>
<reference key="4">
    <citation type="submission" date="2007-04" db="UniProtKB">
        <authorList>
            <person name="Lubec G."/>
            <person name="Afjehi-Sadat L."/>
            <person name="Diao W."/>
        </authorList>
    </citation>
    <scope>PROTEIN SEQUENCE OF 39-48; 174-180; 252-260; 343-352; 379-389; 472-486 AND 672-678</scope>
    <scope>IDENTIFICATION BY MASS SPECTROMETRY</scope>
    <source>
        <strain>Sprague-Dawley</strain>
        <tissue>Hippocampus</tissue>
        <tissue>Spinal cord</tissue>
    </source>
</reference>
<reference key="5">
    <citation type="journal article" date="2001" name="Mol. Biol. Cell">
        <title>Mammalian dynamin-like protein DLP1 tubulates membranes.</title>
        <authorList>
            <person name="Yoon Y."/>
            <person name="Pitts K.R."/>
            <person name="McNiven M.A."/>
        </authorList>
    </citation>
    <scope>MUTAGENESIS OF LYS-38 AND ASP-231</scope>
    <scope>OLIGOMERIZATION</scope>
    <scope>FUNCTION</scope>
</reference>
<reference key="6">
    <citation type="journal article" date="2003" name="J. Biol. Chem.">
        <title>Dynamin-like protein 1 is involved in peroxisomal fission.</title>
        <authorList>
            <person name="Koch A."/>
            <person name="Thiemann M."/>
            <person name="Grabenbauer M."/>
            <person name="Yoon Y."/>
            <person name="McNiven M.A."/>
            <person name="Schrader M."/>
        </authorList>
    </citation>
    <scope>SUBCELLULAR LOCATION</scope>
    <scope>INDUCTION BY BEZAFIBRATE</scope>
    <scope>FUNCTION</scope>
</reference>
<reference key="7">
    <citation type="journal article" date="2003" name="Mol. Cell. Biol.">
        <title>The mitochondrial protein hFis1 regulates mitochondrial fission in mammalian cells through an interaction with the dynamin-like protein DLP1.</title>
        <authorList>
            <person name="Yoon Y."/>
            <person name="Krueger E.W."/>
            <person name="Oswald B.J."/>
            <person name="McNiven M.A."/>
        </authorList>
    </citation>
    <scope>FUNCTION</scope>
    <scope>INTERACTION WITH FIS1</scope>
    <scope>SUBCELLULAR LOCATION</scope>
</reference>
<reference key="8">
    <citation type="journal article" date="2007" name="J. Biol. Chem.">
        <title>Mitotic phosphorylation of dynamin-related GTPase Drp1 participates in mitochondrial fission.</title>
        <authorList>
            <person name="Taguchi N."/>
            <person name="Ishihara N."/>
            <person name="Jofuku A."/>
            <person name="Oka T."/>
            <person name="Mihara K."/>
        </authorList>
    </citation>
    <scope>PHOSPHORYLATION AT SER-635</scope>
    <scope>FUNCTION</scope>
    <scope>MUTAGENESIS OF SER-71; SER-139; SER-149 AND SER-635</scope>
</reference>
<reference key="9">
    <citation type="journal article" date="2008" name="Proc. Natl. Acad. Sci. U.S.A.">
        <title>Bcl-xL induces Drp1-dependent synapse formation in cultured hippocampal neurons.</title>
        <authorList>
            <person name="Li H."/>
            <person name="Chen Y."/>
            <person name="Jones A.F."/>
            <person name="Sanger R.H."/>
            <person name="Collis L.P."/>
            <person name="Flannery R."/>
            <person name="McNay E.C."/>
            <person name="Yu T."/>
            <person name="Schwarzenbacher R."/>
            <person name="Bossy B."/>
            <person name="Bossy-Wetzel E."/>
            <person name="Bennett M.V."/>
            <person name="Pypaert M."/>
            <person name="Hickman J.A."/>
            <person name="Smith P.J."/>
            <person name="Hardwick J.M."/>
            <person name="Jonas E.A."/>
        </authorList>
    </citation>
    <scope>INTERACTION WITH BCL2L1</scope>
    <scope>FUNCTION</scope>
    <scope>MUTAGENESIS OF LYS-38</scope>
</reference>
<reference key="10">
    <citation type="journal article" date="2012" name="J. Biol. Chem.">
        <title>Modulation of dynamin-related protein 1 (DRP1) function by increased O-linked-beta-N-acetylglucosamine modification (O-GlcNAc) in cardiac myocytes.</title>
        <authorList>
            <person name="Gawlowski T."/>
            <person name="Suarez J."/>
            <person name="Scott B."/>
            <person name="Torres-Gonzalez M."/>
            <person name="Wang H."/>
            <person name="Schwappacher R."/>
            <person name="Han X."/>
            <person name="Yates J.R. III"/>
            <person name="Hoshijima M."/>
            <person name="Dillmann W."/>
        </authorList>
    </citation>
    <scope>GLYCOSYLATION AT THR-604 AND THR-605</scope>
    <scope>SUBCELLULAR LOCATION</scope>
</reference>
<reference key="11">
    <citation type="journal article" date="2012" name="Nat. Commun.">
        <title>Quantitative maps of protein phosphorylation sites across 14 different rat organs and tissues.</title>
        <authorList>
            <person name="Lundby A."/>
            <person name="Secher A."/>
            <person name="Lage K."/>
            <person name="Nordsborg N.B."/>
            <person name="Dmytriyev A."/>
            <person name="Lundby C."/>
            <person name="Olsen J.V."/>
        </authorList>
    </citation>
    <scope>PHOSPHORYLATION [LARGE SCALE ANALYSIS] AT SER-635</scope>
    <scope>IDENTIFICATION BY MASS SPECTROMETRY [LARGE SCALE ANALYSIS]</scope>
</reference>
<reference key="12">
    <citation type="journal article" date="2013" name="Nat. Cell Biol.">
        <title>A Bcl-xL-Drp1 complex regulates synaptic vesicle membrane dynamics during endocytosis.</title>
        <authorList>
            <person name="Li H."/>
            <person name="Alavian K.N."/>
            <person name="Lazrove E."/>
            <person name="Mehta N."/>
            <person name="Jones A."/>
            <person name="Zhang P."/>
            <person name="Licznerski P."/>
            <person name="Graham M."/>
            <person name="Uo T."/>
            <person name="Guo J."/>
            <person name="Rahner C."/>
            <person name="Duman R.S."/>
            <person name="Morrison R.S."/>
            <person name="Jonas E.A."/>
        </authorList>
    </citation>
    <scope>FUNCTION IN SYNAPTIC VESICLE REGULATION</scope>
    <scope>INTERACTION WITH BCL2L1; CLTA AND MFF</scope>
    <scope>SUBCELLULAR LOCATION</scope>
</reference>
<reference key="13">
    <citation type="journal article" date="2017" name="Elife">
        <title>PDE2A2 regulates mitochondria morphology and apoptotic cell death via local modulation of cAMP/PKA signalling.</title>
        <authorList>
            <person name="Monterisi S."/>
            <person name="Lobo M.J."/>
            <person name="Livie C."/>
            <person name="Castle J.C."/>
            <person name="Weinberger M."/>
            <person name="Baillie G."/>
            <person name="Surdo N.C."/>
            <person name="Musheshe N."/>
            <person name="Stangherlin A."/>
            <person name="Gottlieb E."/>
            <person name="Maizels R."/>
            <person name="Bortolozzi M."/>
            <person name="Micaroni M."/>
            <person name="Zaccolo M."/>
        </authorList>
    </citation>
    <scope>PHOSPHORYLATION AT SER-656</scope>
</reference>
<sequence length="755" mass="83908">MEALIPVINKLQDVFNTVGADIIQLPQIVVVGTQSSGKSSVLESLVGRDLLPRGTGVVTRRPLILQLVHVSPEDKRKTTGEENDPATWKNSRHLSKGVEAEEWGKFLHTKNKLYTDFDEIRQEIENETERISGNNKGVSPEPIHLKVFSPNVVNLTLVDLPGMTKVPVGDQPKDIELQIRELILRFISNPNSIILAVTAANTDMATSEALKISREVDPDGRRTLAVITKLDLMDAGTDAMDVLMGRVIPVKLGIIGVVNRSQLDINNKKSVTDSIRDEYAFLQKKYPSLANRNGTKYLARTLNRLLMHHIRDCLPELKTRINVLAAQYQSLLNSYGEPVDDKSATLLQLITKFATEYCNTIEGTAKYIETSELCGGARICYIFHETFGRTLESVDPLGGLNTIDILTAIRNATGPRPALFVPEVSFELLVKRQIKRLEEPSLRCVELVHEEMQRIIQHCSNYSTQELLRFPKLHDAIVEVVTCLLRKRLPVTNEMVHNLVAIELAYINTKHPDFADACGLMNNNIEEQRRNRLARELPSAVSRDKSSKVPSALAPASQEPSPAASAEADGKLIQDNRRETKNVASAGGGIGDGGRIGDGGQEPTTGNWRGMLKTSKAEELLAEEKSKPIPIMPASPQKGHAVNLLDVPVPVARKLSAREQRDCEVIERLIKSYFLIVRKNIQDSVPKAVMHFLVNHVKDTLQSELVGQLYKSSLLDDLLTESEDMAQRRKEAADMLKALQGASQIIAEIRETHLW</sequence>
<dbReference type="EC" id="3.6.5.5" evidence="2"/>
<dbReference type="EMBL" id="AF019043">
    <property type="protein sequence ID" value="AAB72197.1"/>
    <property type="molecule type" value="mRNA"/>
</dbReference>
<dbReference type="EMBL" id="AF020207">
    <property type="protein sequence ID" value="AAB71232.1"/>
    <property type="molecule type" value="mRNA"/>
</dbReference>
<dbReference type="EMBL" id="AF020208">
    <property type="protein sequence ID" value="AAB71233.1"/>
    <property type="molecule type" value="mRNA"/>
</dbReference>
<dbReference type="EMBL" id="AF020209">
    <property type="protein sequence ID" value="AAB71234.1"/>
    <property type="molecule type" value="mRNA"/>
</dbReference>
<dbReference type="EMBL" id="AF020210">
    <property type="protein sequence ID" value="AAB71235.1"/>
    <property type="molecule type" value="mRNA"/>
</dbReference>
<dbReference type="EMBL" id="AF020211">
    <property type="protein sequence ID" value="AAB71236.1"/>
    <property type="molecule type" value="mRNA"/>
</dbReference>
<dbReference type="EMBL" id="AF020212">
    <property type="protein sequence ID" value="AAB71237.1"/>
    <property type="molecule type" value="mRNA"/>
</dbReference>
<dbReference type="EMBL" id="AF020213">
    <property type="protein sequence ID" value="AAB71238.1"/>
    <property type="molecule type" value="mRNA"/>
</dbReference>
<dbReference type="EMBL" id="AF107048">
    <property type="protein sequence ID" value="AAD22412.1"/>
    <property type="molecule type" value="mRNA"/>
</dbReference>
<dbReference type="EMBL" id="AF132727">
    <property type="protein sequence ID" value="AAD31278.1"/>
    <property type="molecule type" value="mRNA"/>
</dbReference>
<dbReference type="EMBL" id="BC085843">
    <property type="protein sequence ID" value="AAH85843.1"/>
    <property type="molecule type" value="mRNA"/>
</dbReference>
<dbReference type="RefSeq" id="NP_446107.2">
    <molecule id="O35303-2"/>
    <property type="nucleotide sequence ID" value="NM_053655.3"/>
</dbReference>
<dbReference type="RefSeq" id="XP_006248785.1">
    <property type="nucleotide sequence ID" value="XM_006248723.3"/>
</dbReference>
<dbReference type="RefSeq" id="XP_008767063.1">
    <property type="nucleotide sequence ID" value="XM_008768841.2"/>
</dbReference>
<dbReference type="RefSeq" id="XP_008767064.1">
    <property type="nucleotide sequence ID" value="XM_008768842.2"/>
</dbReference>
<dbReference type="RefSeq" id="XP_008767065.1">
    <property type="nucleotide sequence ID" value="XM_008768843.2"/>
</dbReference>
<dbReference type="RefSeq" id="XP_038943817.1">
    <molecule id="O35303-1"/>
    <property type="nucleotide sequence ID" value="XM_039087889.2"/>
</dbReference>
<dbReference type="RefSeq" id="XP_038943819.1">
    <molecule id="O35303-4"/>
    <property type="nucleotide sequence ID" value="XM_039087891.2"/>
</dbReference>
<dbReference type="RefSeq" id="XP_038943820.1">
    <molecule id="O35303-5"/>
    <property type="nucleotide sequence ID" value="XM_039087892.2"/>
</dbReference>
<dbReference type="RefSeq" id="XP_038943827.1">
    <molecule id="O35303-6"/>
    <property type="nucleotide sequence ID" value="XM_039087899.2"/>
</dbReference>
<dbReference type="SMR" id="O35303"/>
<dbReference type="BioGRID" id="250292">
    <property type="interactions" value="6"/>
</dbReference>
<dbReference type="CORUM" id="O35303"/>
<dbReference type="DIP" id="DIP-29699N"/>
<dbReference type="ELM" id="O35303"/>
<dbReference type="FunCoup" id="O35303">
    <property type="interactions" value="5102"/>
</dbReference>
<dbReference type="IntAct" id="O35303">
    <property type="interactions" value="9"/>
</dbReference>
<dbReference type="MINT" id="O35303"/>
<dbReference type="STRING" id="10116.ENSRNOP00000002478"/>
<dbReference type="GlyCosmos" id="O35303">
    <property type="glycosylation" value="2 sites, No reported glycans"/>
</dbReference>
<dbReference type="GlyGen" id="O35303">
    <property type="glycosylation" value="2 sites, 1 O-linked glycan (2 sites)"/>
</dbReference>
<dbReference type="iPTMnet" id="O35303"/>
<dbReference type="PhosphoSitePlus" id="O35303"/>
<dbReference type="SwissPalm" id="O35303"/>
<dbReference type="jPOST" id="O35303"/>
<dbReference type="PaxDb" id="10116-ENSRNOP00000002478"/>
<dbReference type="PeptideAtlas" id="O35303"/>
<dbReference type="Ensembl" id="ENSRNOT00000002477.9">
    <molecule id="O35303-2"/>
    <property type="protein sequence ID" value="ENSRNOP00000002477.6"/>
    <property type="gene ID" value="ENSRNOG00000001813.9"/>
</dbReference>
<dbReference type="Ensembl" id="ENSRNOT00000002478.8">
    <molecule id="O35303-1"/>
    <property type="protein sequence ID" value="ENSRNOP00000002478.5"/>
    <property type="gene ID" value="ENSRNOG00000001813.9"/>
</dbReference>
<dbReference type="Ensembl" id="ENSRNOT00000094355.1">
    <molecule id="O35303-6"/>
    <property type="protein sequence ID" value="ENSRNOP00000090570.1"/>
    <property type="gene ID" value="ENSRNOG00000001813.9"/>
</dbReference>
<dbReference type="Ensembl" id="ENSRNOT00000101129.1">
    <molecule id="O35303-5"/>
    <property type="protein sequence ID" value="ENSRNOP00000078603.1"/>
    <property type="gene ID" value="ENSRNOG00000001813.9"/>
</dbReference>
<dbReference type="GeneID" id="114114"/>
<dbReference type="KEGG" id="rno:114114"/>
<dbReference type="AGR" id="RGD:620416"/>
<dbReference type="CTD" id="10059"/>
<dbReference type="RGD" id="620416">
    <property type="gene designation" value="Dnm1l"/>
</dbReference>
<dbReference type="eggNOG" id="KOG0446">
    <property type="taxonomic scope" value="Eukaryota"/>
</dbReference>
<dbReference type="GeneTree" id="ENSGT00940000155504"/>
<dbReference type="HOGENOM" id="CLU_008964_5_0_1"/>
<dbReference type="InParanoid" id="O35303"/>
<dbReference type="OMA" id="KICHNCG"/>
<dbReference type="OrthoDB" id="5061070at2759"/>
<dbReference type="PhylomeDB" id="O35303"/>
<dbReference type="TreeFam" id="TF352031"/>
<dbReference type="BRENDA" id="3.6.5.5">
    <property type="organism ID" value="5301"/>
</dbReference>
<dbReference type="Reactome" id="R-RNO-75153">
    <property type="pathway name" value="Apoptotic execution phase"/>
</dbReference>
<dbReference type="PRO" id="PR:O35303"/>
<dbReference type="Proteomes" id="UP000002494">
    <property type="component" value="Chromosome 11"/>
</dbReference>
<dbReference type="Bgee" id="ENSRNOG00000001813">
    <property type="expression patterns" value="Expressed in cerebellum and 19 other cell types or tissues"/>
</dbReference>
<dbReference type="GO" id="GO:0005903">
    <property type="term" value="C:brush border"/>
    <property type="evidence" value="ECO:0000266"/>
    <property type="project" value="RGD"/>
</dbReference>
<dbReference type="GO" id="GO:0005905">
    <property type="term" value="C:clathrin-coated pit"/>
    <property type="evidence" value="ECO:0007669"/>
    <property type="project" value="UniProtKB-SubCell"/>
</dbReference>
<dbReference type="GO" id="GO:0005737">
    <property type="term" value="C:cytoplasm"/>
    <property type="evidence" value="ECO:0000266"/>
    <property type="project" value="RGD"/>
</dbReference>
<dbReference type="GO" id="GO:0005829">
    <property type="term" value="C:cytosol"/>
    <property type="evidence" value="ECO:0000314"/>
    <property type="project" value="ParkinsonsUK-UCL"/>
</dbReference>
<dbReference type="GO" id="GO:0005783">
    <property type="term" value="C:endoplasmic reticulum"/>
    <property type="evidence" value="ECO:0000314"/>
    <property type="project" value="ParkinsonsUK-UCL"/>
</dbReference>
<dbReference type="GO" id="GO:0005794">
    <property type="term" value="C:Golgi apparatus"/>
    <property type="evidence" value="ECO:0000266"/>
    <property type="project" value="RGD"/>
</dbReference>
<dbReference type="GO" id="GO:0000139">
    <property type="term" value="C:Golgi membrane"/>
    <property type="evidence" value="ECO:0000314"/>
    <property type="project" value="ParkinsonsUK-UCL"/>
</dbReference>
<dbReference type="GO" id="GO:0016020">
    <property type="term" value="C:membrane"/>
    <property type="evidence" value="ECO:0000318"/>
    <property type="project" value="GO_Central"/>
</dbReference>
<dbReference type="GO" id="GO:0005874">
    <property type="term" value="C:microtubule"/>
    <property type="evidence" value="ECO:0000266"/>
    <property type="project" value="RGD"/>
</dbReference>
<dbReference type="GO" id="GO:0005741">
    <property type="term" value="C:mitochondrial outer membrane"/>
    <property type="evidence" value="ECO:0000250"/>
    <property type="project" value="UniProtKB"/>
</dbReference>
<dbReference type="GO" id="GO:0005739">
    <property type="term" value="C:mitochondrion"/>
    <property type="evidence" value="ECO:0000250"/>
    <property type="project" value="UniProtKB"/>
</dbReference>
<dbReference type="GO" id="GO:0099073">
    <property type="term" value="C:mitochondrion-derived vesicle"/>
    <property type="evidence" value="ECO:0000266"/>
    <property type="project" value="RGD"/>
</dbReference>
<dbReference type="GO" id="GO:0048471">
    <property type="term" value="C:perinuclear region of cytoplasm"/>
    <property type="evidence" value="ECO:0000314"/>
    <property type="project" value="ParkinsonsUK-UCL"/>
</dbReference>
<dbReference type="GO" id="GO:0005777">
    <property type="term" value="C:peroxisome"/>
    <property type="evidence" value="ECO:0000314"/>
    <property type="project" value="RGD"/>
</dbReference>
<dbReference type="GO" id="GO:0098835">
    <property type="term" value="C:presynaptic endocytic zone membrane"/>
    <property type="evidence" value="ECO:0000314"/>
    <property type="project" value="SynGO"/>
</dbReference>
<dbReference type="GO" id="GO:0032991">
    <property type="term" value="C:protein-containing complex"/>
    <property type="evidence" value="ECO:0000266"/>
    <property type="project" value="RGD"/>
</dbReference>
<dbReference type="GO" id="GO:0099503">
    <property type="term" value="C:secretory vesicle"/>
    <property type="evidence" value="ECO:0000314"/>
    <property type="project" value="ParkinsonsUK-UCL"/>
</dbReference>
<dbReference type="GO" id="GO:0030672">
    <property type="term" value="C:synaptic vesicle membrane"/>
    <property type="evidence" value="ECO:0000314"/>
    <property type="project" value="SynGO"/>
</dbReference>
<dbReference type="GO" id="GO:0051433">
    <property type="term" value="F:BH2 domain binding"/>
    <property type="evidence" value="ECO:0000353"/>
    <property type="project" value="CAFA"/>
</dbReference>
<dbReference type="GO" id="GO:0030276">
    <property type="term" value="F:clathrin binding"/>
    <property type="evidence" value="ECO:0000353"/>
    <property type="project" value="CAFA"/>
</dbReference>
<dbReference type="GO" id="GO:0005525">
    <property type="term" value="F:GTP binding"/>
    <property type="evidence" value="ECO:0007669"/>
    <property type="project" value="UniProtKB-KW"/>
</dbReference>
<dbReference type="GO" id="GO:0030742">
    <property type="term" value="F:GTP-dependent protein binding"/>
    <property type="evidence" value="ECO:0000266"/>
    <property type="project" value="RGD"/>
</dbReference>
<dbReference type="GO" id="GO:0003924">
    <property type="term" value="F:GTPase activity"/>
    <property type="evidence" value="ECO:0000250"/>
    <property type="project" value="UniProtKB"/>
</dbReference>
<dbReference type="GO" id="GO:0042802">
    <property type="term" value="F:identical protein binding"/>
    <property type="evidence" value="ECO:0000353"/>
    <property type="project" value="RGD"/>
</dbReference>
<dbReference type="GO" id="GO:0008289">
    <property type="term" value="F:lipid binding"/>
    <property type="evidence" value="ECO:0007669"/>
    <property type="project" value="UniProtKB-KW"/>
</dbReference>
<dbReference type="GO" id="GO:0008017">
    <property type="term" value="F:microtubule binding"/>
    <property type="evidence" value="ECO:0000318"/>
    <property type="project" value="GO_Central"/>
</dbReference>
<dbReference type="GO" id="GO:0042803">
    <property type="term" value="F:protein homodimerization activity"/>
    <property type="evidence" value="ECO:0000250"/>
    <property type="project" value="UniProtKB"/>
</dbReference>
<dbReference type="GO" id="GO:0120283">
    <property type="term" value="F:protein serine/threonine kinase binding"/>
    <property type="evidence" value="ECO:0000353"/>
    <property type="project" value="RGD"/>
</dbReference>
<dbReference type="GO" id="GO:0044877">
    <property type="term" value="F:protein-containing complex binding"/>
    <property type="evidence" value="ECO:0000353"/>
    <property type="project" value="RGD"/>
</dbReference>
<dbReference type="GO" id="GO:0031267">
    <property type="term" value="F:small GTPase binding"/>
    <property type="evidence" value="ECO:0000266"/>
    <property type="project" value="RGD"/>
</dbReference>
<dbReference type="GO" id="GO:0031625">
    <property type="term" value="F:ubiquitin protein ligase binding"/>
    <property type="evidence" value="ECO:0000266"/>
    <property type="project" value="RGD"/>
</dbReference>
<dbReference type="GO" id="GO:0006816">
    <property type="term" value="P:calcium ion transport"/>
    <property type="evidence" value="ECO:0000266"/>
    <property type="project" value="RGD"/>
</dbReference>
<dbReference type="GO" id="GO:0071456">
    <property type="term" value="P:cellular response to hypoxia"/>
    <property type="evidence" value="ECO:0000270"/>
    <property type="project" value="RGD"/>
</dbReference>
<dbReference type="GO" id="GO:0071396">
    <property type="term" value="P:cellular response to lipid"/>
    <property type="evidence" value="ECO:0000270"/>
    <property type="project" value="RGD"/>
</dbReference>
<dbReference type="GO" id="GO:0006897">
    <property type="term" value="P:endocytosis"/>
    <property type="evidence" value="ECO:0000318"/>
    <property type="project" value="GO_Central"/>
</dbReference>
<dbReference type="GO" id="GO:0060047">
    <property type="term" value="P:heart contraction"/>
    <property type="evidence" value="ECO:0000266"/>
    <property type="project" value="RGD"/>
</dbReference>
<dbReference type="GO" id="GO:0048312">
    <property type="term" value="P:intracellular distribution of mitochondria"/>
    <property type="evidence" value="ECO:0000315"/>
    <property type="project" value="RGD"/>
</dbReference>
<dbReference type="GO" id="GO:0000266">
    <property type="term" value="P:mitochondrial fission"/>
    <property type="evidence" value="ECO:0000250"/>
    <property type="project" value="UniProtKB"/>
</dbReference>
<dbReference type="GO" id="GO:0043653">
    <property type="term" value="P:mitochondrial fragmentation involved in apoptotic process"/>
    <property type="evidence" value="ECO:0000315"/>
    <property type="project" value="RGD"/>
</dbReference>
<dbReference type="GO" id="GO:0090149">
    <property type="term" value="P:mitochondrial membrane fission"/>
    <property type="evidence" value="ECO:0000266"/>
    <property type="project" value="RGD"/>
</dbReference>
<dbReference type="GO" id="GO:0007005">
    <property type="term" value="P:mitochondrion organization"/>
    <property type="evidence" value="ECO:0000315"/>
    <property type="project" value="RGD"/>
</dbReference>
<dbReference type="GO" id="GO:0160040">
    <property type="term" value="P:mitocytosis"/>
    <property type="evidence" value="ECO:0000266"/>
    <property type="project" value="RGD"/>
</dbReference>
<dbReference type="GO" id="GO:0010637">
    <property type="term" value="P:negative regulation of mitochondrial fusion"/>
    <property type="evidence" value="ECO:0000315"/>
    <property type="project" value="CAFA"/>
</dbReference>
<dbReference type="GO" id="GO:0016559">
    <property type="term" value="P:peroxisome fission"/>
    <property type="evidence" value="ECO:0000250"/>
    <property type="project" value="UniProtKB"/>
</dbReference>
<dbReference type="GO" id="GO:0061003">
    <property type="term" value="P:positive regulation of dendritic spine morphogenesis"/>
    <property type="evidence" value="ECO:0000315"/>
    <property type="project" value="RGD"/>
</dbReference>
<dbReference type="GO" id="GO:0090141">
    <property type="term" value="P:positive regulation of mitochondrial fission"/>
    <property type="evidence" value="ECO:0000315"/>
    <property type="project" value="RGD"/>
</dbReference>
<dbReference type="GO" id="GO:0090023">
    <property type="term" value="P:positive regulation of neutrophil chemotaxis"/>
    <property type="evidence" value="ECO:0000266"/>
    <property type="project" value="RGD"/>
</dbReference>
<dbReference type="GO" id="GO:0050714">
    <property type="term" value="P:positive regulation of protein secretion"/>
    <property type="evidence" value="ECO:0000266"/>
    <property type="project" value="RGD"/>
</dbReference>
<dbReference type="GO" id="GO:1900244">
    <property type="term" value="P:positive regulation of synaptic vesicle endocytosis"/>
    <property type="evidence" value="ECO:0000315"/>
    <property type="project" value="CAFA"/>
</dbReference>
<dbReference type="GO" id="GO:2000302">
    <property type="term" value="P:positive regulation of synaptic vesicle exocytosis"/>
    <property type="evidence" value="ECO:0000315"/>
    <property type="project" value="CAFA"/>
</dbReference>
<dbReference type="GO" id="GO:0051259">
    <property type="term" value="P:protein complex oligomerization"/>
    <property type="evidence" value="ECO:0000250"/>
    <property type="project" value="UniProtKB"/>
</dbReference>
<dbReference type="GO" id="GO:0070585">
    <property type="term" value="P:protein localization to mitochondrion"/>
    <property type="evidence" value="ECO:0000266"/>
    <property type="project" value="RGD"/>
</dbReference>
<dbReference type="GO" id="GO:1903578">
    <property type="term" value="P:regulation of ATP metabolic process"/>
    <property type="evidence" value="ECO:0000266"/>
    <property type="project" value="RGD"/>
</dbReference>
<dbReference type="GO" id="GO:0010468">
    <property type="term" value="P:regulation of gene expression"/>
    <property type="evidence" value="ECO:0000266"/>
    <property type="project" value="RGD"/>
</dbReference>
<dbReference type="GO" id="GO:0010821">
    <property type="term" value="P:regulation of mitochondrion organization"/>
    <property type="evidence" value="ECO:0000266"/>
    <property type="project" value="RGD"/>
</dbReference>
<dbReference type="GO" id="GO:1901524">
    <property type="term" value="P:regulation of mitophagy"/>
    <property type="evidence" value="ECO:0000266"/>
    <property type="project" value="RGD"/>
</dbReference>
<dbReference type="GO" id="GO:1900063">
    <property type="term" value="P:regulation of peroxisome organization"/>
    <property type="evidence" value="ECO:0000266"/>
    <property type="project" value="RGD"/>
</dbReference>
<dbReference type="GO" id="GO:0034976">
    <property type="term" value="P:response to endoplasmic reticulum stress"/>
    <property type="evidence" value="ECO:0000315"/>
    <property type="project" value="RGD"/>
</dbReference>
<dbReference type="GO" id="GO:1905395">
    <property type="term" value="P:response to flavonoid"/>
    <property type="evidence" value="ECO:0000270"/>
    <property type="project" value="RGD"/>
</dbReference>
<dbReference type="GO" id="GO:1990910">
    <property type="term" value="P:response to hypobaric hypoxia"/>
    <property type="evidence" value="ECO:0000270"/>
    <property type="project" value="RGD"/>
</dbReference>
<dbReference type="GO" id="GO:0048511">
    <property type="term" value="P:rhythmic process"/>
    <property type="evidence" value="ECO:0007669"/>
    <property type="project" value="UniProtKB-KW"/>
</dbReference>
<dbReference type="GO" id="GO:0048488">
    <property type="term" value="P:synaptic vesicle endocytosis"/>
    <property type="evidence" value="ECO:0000314"/>
    <property type="project" value="SynGO"/>
</dbReference>
<dbReference type="GO" id="GO:0036466">
    <property type="term" value="P:synaptic vesicle recycling via endosome"/>
    <property type="evidence" value="ECO:0000315"/>
    <property type="project" value="CAFA"/>
</dbReference>
<dbReference type="CDD" id="cd08771">
    <property type="entry name" value="DLP_1"/>
    <property type="match status" value="1"/>
</dbReference>
<dbReference type="FunFam" id="1.20.120.1240:FF:000034">
    <property type="entry name" value="Dynamin 1 like"/>
    <property type="match status" value="1"/>
</dbReference>
<dbReference type="FunFam" id="1.20.120.1240:FF:000006">
    <property type="entry name" value="Dynamin-1-like protein isoform 1"/>
    <property type="match status" value="1"/>
</dbReference>
<dbReference type="FunFam" id="3.40.50.300:FF:000172">
    <property type="entry name" value="Dynamin-1-like protein isoform 1"/>
    <property type="match status" value="1"/>
</dbReference>
<dbReference type="Gene3D" id="1.20.120.1240">
    <property type="entry name" value="Dynamin, middle domain"/>
    <property type="match status" value="2"/>
</dbReference>
<dbReference type="Gene3D" id="3.40.50.300">
    <property type="entry name" value="P-loop containing nucleotide triphosphate hydrolases"/>
    <property type="match status" value="1"/>
</dbReference>
<dbReference type="InterPro" id="IPR022812">
    <property type="entry name" value="Dynamin"/>
</dbReference>
<dbReference type="InterPro" id="IPR001401">
    <property type="entry name" value="Dynamin_GTPase"/>
</dbReference>
<dbReference type="InterPro" id="IPR019762">
    <property type="entry name" value="Dynamin_GTPase_CS"/>
</dbReference>
<dbReference type="InterPro" id="IPR045063">
    <property type="entry name" value="Dynamin_N"/>
</dbReference>
<dbReference type="InterPro" id="IPR000375">
    <property type="entry name" value="Dynamin_stalk"/>
</dbReference>
<dbReference type="InterPro" id="IPR030381">
    <property type="entry name" value="G_DYNAMIN_dom"/>
</dbReference>
<dbReference type="InterPro" id="IPR003130">
    <property type="entry name" value="GED"/>
</dbReference>
<dbReference type="InterPro" id="IPR020850">
    <property type="entry name" value="GED_dom"/>
</dbReference>
<dbReference type="InterPro" id="IPR027417">
    <property type="entry name" value="P-loop_NTPase"/>
</dbReference>
<dbReference type="PANTHER" id="PTHR11566">
    <property type="entry name" value="DYNAMIN"/>
    <property type="match status" value="1"/>
</dbReference>
<dbReference type="PANTHER" id="PTHR11566:SF39">
    <property type="entry name" value="DYNAMIN-1-LIKE PROTEIN"/>
    <property type="match status" value="1"/>
</dbReference>
<dbReference type="Pfam" id="PF01031">
    <property type="entry name" value="Dynamin_M"/>
    <property type="match status" value="1"/>
</dbReference>
<dbReference type="Pfam" id="PF00350">
    <property type="entry name" value="Dynamin_N"/>
    <property type="match status" value="1"/>
</dbReference>
<dbReference type="Pfam" id="PF02212">
    <property type="entry name" value="GED"/>
    <property type="match status" value="1"/>
</dbReference>
<dbReference type="PRINTS" id="PR00195">
    <property type="entry name" value="DYNAMIN"/>
</dbReference>
<dbReference type="SMART" id="SM00053">
    <property type="entry name" value="DYNc"/>
    <property type="match status" value="1"/>
</dbReference>
<dbReference type="SMART" id="SM00302">
    <property type="entry name" value="GED"/>
    <property type="match status" value="1"/>
</dbReference>
<dbReference type="SUPFAM" id="SSF52540">
    <property type="entry name" value="P-loop containing nucleoside triphosphate hydrolases"/>
    <property type="match status" value="1"/>
</dbReference>
<dbReference type="PROSITE" id="PS00410">
    <property type="entry name" value="G_DYNAMIN_1"/>
    <property type="match status" value="1"/>
</dbReference>
<dbReference type="PROSITE" id="PS51718">
    <property type="entry name" value="G_DYNAMIN_2"/>
    <property type="match status" value="1"/>
</dbReference>
<dbReference type="PROSITE" id="PS51388">
    <property type="entry name" value="GED"/>
    <property type="match status" value="1"/>
</dbReference>
<organism>
    <name type="scientific">Rattus norvegicus</name>
    <name type="common">Rat</name>
    <dbReference type="NCBI Taxonomy" id="10116"/>
    <lineage>
        <taxon>Eukaryota</taxon>
        <taxon>Metazoa</taxon>
        <taxon>Chordata</taxon>
        <taxon>Craniata</taxon>
        <taxon>Vertebrata</taxon>
        <taxon>Euteleostomi</taxon>
        <taxon>Mammalia</taxon>
        <taxon>Eutheria</taxon>
        <taxon>Euarchontoglires</taxon>
        <taxon>Glires</taxon>
        <taxon>Rodentia</taxon>
        <taxon>Myomorpha</taxon>
        <taxon>Muroidea</taxon>
        <taxon>Muridae</taxon>
        <taxon>Murinae</taxon>
        <taxon>Rattus</taxon>
    </lineage>
</organism>
<proteinExistence type="evidence at protein level"/>
<accession>O35303</accession>
<accession>O35318</accession>
<accession>O35319</accession>
<accession>O35320</accession>
<accession>O35321</accession>
<accession>O35322</accession>
<accession>O35323</accession>
<accession>Q5U2W1</accession>
<accession>Q792T7</accession>
<accession>Q9R234</accession>
<accession>Q9R277</accession>
<protein>
    <recommendedName>
        <fullName evidence="21">Dynamin-1-like protein</fullName>
        <ecNumber evidence="2">3.6.5.5</ecNumber>
    </recommendedName>
    <alternativeName>
        <fullName evidence="20">Dynamin-like protein</fullName>
    </alternativeName>
</protein>
<keyword id="KW-0007">Acetylation</keyword>
<keyword id="KW-0025">Alternative splicing</keyword>
<keyword id="KW-0090">Biological rhythms</keyword>
<keyword id="KW-0168">Coated pit</keyword>
<keyword id="KW-0963">Cytoplasm</keyword>
<keyword id="KW-0968">Cytoplasmic vesicle</keyword>
<keyword id="KW-0903">Direct protein sequencing</keyword>
<keyword id="KW-0254">Endocytosis</keyword>
<keyword id="KW-0325">Glycoprotein</keyword>
<keyword id="KW-0333">Golgi apparatus</keyword>
<keyword id="KW-0342">GTP-binding</keyword>
<keyword id="KW-0378">Hydrolase</keyword>
<keyword id="KW-1017">Isopeptide bond</keyword>
<keyword id="KW-0446">Lipid-binding</keyword>
<keyword id="KW-0472">Membrane</keyword>
<keyword id="KW-0496">Mitochondrion</keyword>
<keyword id="KW-1000">Mitochondrion outer membrane</keyword>
<keyword id="KW-1210">Necrosis</keyword>
<keyword id="KW-0547">Nucleotide-binding</keyword>
<keyword id="KW-0576">Peroxisome</keyword>
<keyword id="KW-0597">Phosphoprotein</keyword>
<keyword id="KW-1185">Reference proteome</keyword>
<keyword id="KW-0702">S-nitrosylation</keyword>
<keyword id="KW-0770">Synapse</keyword>
<keyword id="KW-0832">Ubl conjugation</keyword>
<feature type="chain" id="PRO_0000206568" description="Dynamin-1-like protein">
    <location>
        <begin position="1"/>
        <end position="755"/>
    </location>
</feature>
<feature type="domain" description="Dynamin-type G" evidence="5">
    <location>
        <begin position="22"/>
        <end position="315"/>
    </location>
</feature>
<feature type="domain" description="GED" evidence="4">
    <location>
        <begin position="663"/>
        <end position="754"/>
    </location>
</feature>
<feature type="region of interest" description="G1 motif" evidence="5">
    <location>
        <begin position="32"/>
        <end position="39"/>
    </location>
</feature>
<feature type="region of interest" description="G2 motif" evidence="5">
    <location>
        <begin position="58"/>
        <end position="60"/>
    </location>
</feature>
<feature type="region of interest" description="G3 motif" evidence="5">
    <location>
        <begin position="159"/>
        <end position="162"/>
    </location>
</feature>
<feature type="region of interest" description="G4 motif" evidence="5">
    <location>
        <begin position="228"/>
        <end position="231"/>
    </location>
</feature>
<feature type="region of interest" description="G5 motif" evidence="5">
    <location>
        <begin position="258"/>
        <end position="261"/>
    </location>
</feature>
<feature type="region of interest" description="Middle domain" evidence="2">
    <location>
        <begin position="357"/>
        <end position="502"/>
    </location>
</feature>
<feature type="region of interest" description="Interaction with GSK3B" evidence="2">
    <location>
        <begin position="461"/>
        <end position="704"/>
    </location>
</feature>
<feature type="region of interest" description="B domain" evidence="2">
    <location>
        <begin position="515"/>
        <end position="582"/>
    </location>
</feature>
<feature type="region of interest" description="Disordered" evidence="6">
    <location>
        <begin position="536"/>
        <end position="610"/>
    </location>
</feature>
<feature type="region of interest" description="Important for homodimerization" evidence="2">
    <location>
        <begin position="673"/>
        <end position="687"/>
    </location>
</feature>
<feature type="compositionally biased region" description="Low complexity" evidence="6">
    <location>
        <begin position="550"/>
        <end position="567"/>
    </location>
</feature>
<feature type="compositionally biased region" description="Basic and acidic residues" evidence="6">
    <location>
        <begin position="568"/>
        <end position="581"/>
    </location>
</feature>
<feature type="compositionally biased region" description="Gly residues" evidence="6">
    <location>
        <begin position="586"/>
        <end position="600"/>
    </location>
</feature>
<feature type="binding site" evidence="2">
    <location>
        <begin position="32"/>
        <end position="40"/>
    </location>
    <ligand>
        <name>GTP</name>
        <dbReference type="ChEBI" id="CHEBI:37565"/>
    </ligand>
</feature>
<feature type="binding site" evidence="2">
    <location>
        <begin position="228"/>
        <end position="234"/>
    </location>
    <ligand>
        <name>GTP</name>
        <dbReference type="ChEBI" id="CHEBI:37565"/>
    </ligand>
</feature>
<feature type="binding site" evidence="2">
    <location>
        <begin position="259"/>
        <end position="262"/>
    </location>
    <ligand>
        <name>GTP</name>
        <dbReference type="ChEBI" id="CHEBI:37565"/>
    </ligand>
</feature>
<feature type="modified residue" description="N-acetylmethionine" evidence="2">
    <location>
        <position position="1"/>
    </location>
</feature>
<feature type="modified residue" description="Phosphoserine" evidence="2">
    <location>
        <position position="542"/>
    </location>
</feature>
<feature type="modified residue" description="Phosphoserine" evidence="2">
    <location>
        <position position="561"/>
    </location>
</feature>
<feature type="modified residue" description="N6-acetyllysine; alternate" evidence="3">
    <location>
        <position position="616"/>
    </location>
</feature>
<feature type="modified residue" description="Phosphoserine" evidence="2">
    <location>
        <position position="626"/>
    </location>
</feature>
<feature type="modified residue" description="Phosphoserine; by CDK1" evidence="11 23">
    <location>
        <position position="635"/>
    </location>
</feature>
<feature type="modified residue" description="Phosphoserine; by CAMK1 and PKA" evidence="15">
    <location>
        <position position="656"/>
    </location>
</feature>
<feature type="modified residue" description="S-nitrosocysteine" evidence="2">
    <location>
        <position position="663"/>
    </location>
</feature>
<feature type="glycosylation site" description="O-linked (GlcNAc) threonine" evidence="13">
    <location>
        <position position="604"/>
    </location>
</feature>
<feature type="glycosylation site" description="O-linked (GlcNAc) threonine" evidence="13">
    <location>
        <position position="605"/>
    </location>
</feature>
<feature type="cross-link" description="Glycyl lysine isopeptide (Lys-Gly) (interchain with G-Cter in SUMO)" evidence="1">
    <location>
        <position position="545"/>
    </location>
</feature>
<feature type="cross-link" description="Glycyl lysine isopeptide (Lys-Gly) (interchain with G-Cter in SUMO)" evidence="1">
    <location>
        <position position="548"/>
    </location>
</feature>
<feature type="cross-link" description="Glycyl lysine isopeptide (Lys-Gly) (interchain with G-Cter in SUMO)" evidence="1">
    <location>
        <position position="571"/>
    </location>
</feature>
<feature type="cross-link" description="Glycyl lysine isopeptide (Lys-Gly) (interchain with G-Cter in SUMO)" evidence="1">
    <location>
        <position position="581"/>
    </location>
</feature>
<feature type="cross-link" description="Glycyl lysine isopeptide (Lys-Gly) (interchain with G-Cter in SUMO)" evidence="1">
    <location>
        <position position="613"/>
    </location>
</feature>
<feature type="cross-link" description="Glycyl lysine isopeptide (Lys-Gly) (interchain with G-Cter in SUMO); alternate" evidence="1">
    <location>
        <position position="616"/>
    </location>
</feature>
<feature type="cross-link" description="Glycyl lysine isopeptide (Lys-Gly) (interchain with G-Cter in SUMO)" evidence="1">
    <location>
        <position position="625"/>
    </location>
</feature>
<feature type="cross-link" description="Glycyl lysine isopeptide (Lys-Gly) (interchain with G-Cter in SUMO)" evidence="1">
    <location>
        <position position="627"/>
    </location>
</feature>
<feature type="splice variant" id="VSP_013696" description="In isoform 4." evidence="20">
    <original>DPATWKNSRHLSKG</original>
    <variation>GKFQSWR</variation>
    <location>
        <begin position="84"/>
        <end position="97"/>
    </location>
</feature>
<feature type="splice variant" id="VSP_013697" description="In isoform 2." evidence="19 20">
    <location>
        <begin position="84"/>
        <end position="96"/>
    </location>
</feature>
<feature type="splice variant" id="VSP_013698" description="In isoform 3." evidence="17 20">
    <original>D</original>
    <variation>GKFQSWN</variation>
    <location>
        <position position="84"/>
    </location>
</feature>
<feature type="splice variant" id="VSP_013699" description="In isoform 3." evidence="17 20">
    <original>SSKVPSALAPASQEPSPAASAEADGKLIQDNRRETKNVASAGGGIGDGGRI</original>
    <variation>VASGGGGV</variation>
    <location>
        <begin position="546"/>
        <end position="596"/>
    </location>
</feature>
<feature type="splice variant" id="VSP_013700" description="In isoform 6." evidence="20">
    <location>
        <begin position="546"/>
        <end position="582"/>
    </location>
</feature>
<feature type="splice variant" id="VSP_013701" description="In isoform 2." evidence="19 20">
    <location>
        <begin position="546"/>
        <end position="571"/>
    </location>
</feature>
<feature type="splice variant" id="VSP_013702" description="In isoform 5." evidence="17 20">
    <location>
        <begin position="572"/>
        <end position="582"/>
    </location>
</feature>
<feature type="mutagenesis site" description="Defective in GTP hydrolysis. Tubulates spherical liposomes. Impairs mitochondrial division. Decreases the BCL2L1-mediated induction of synapse number and size of synaptic vesicle clusters." evidence="8 12">
    <original>K</original>
    <variation>A</variation>
    <location>
        <position position="38"/>
    </location>
</feature>
<feature type="mutagenesis site" description="No effect on mitotic phosphorylation." evidence="11">
    <original>S</original>
    <variation>A</variation>
    <location>
        <position position="71"/>
    </location>
</feature>
<feature type="mutagenesis site" description="No effect on mitotic phosphorylation." evidence="11">
    <original>S</original>
    <variation>A</variation>
    <location>
        <position position="139"/>
    </location>
</feature>
<feature type="mutagenesis site" description="No effect on mitotic phosphorylation." evidence="11">
    <original>S</original>
    <variation>A</variation>
    <location>
        <position position="149"/>
    </location>
</feature>
<feature type="mutagenesis site" description="Defective in GTP-binding." evidence="8">
    <original>D</original>
    <variation>N</variation>
    <location>
        <position position="231"/>
    </location>
</feature>
<feature type="mutagenesis site" description="Abolishes mitotic phosphorylation. Reduced mitotic mitochondrial fragmentation." evidence="11">
    <original>S</original>
    <variation>A</variation>
    <location>
        <position position="635"/>
    </location>
</feature>
<feature type="sequence conflict" description="In Ref. 1; AAB71237." evidence="21" ref="1">
    <original>A</original>
    <variation>V</variation>
    <location>
        <position position="517"/>
    </location>
</feature>
<feature type="sequence conflict" description="In Ref. 2; AAD31278." evidence="21" ref="2">
    <original>G</original>
    <variation>V</variation>
    <location>
        <position position="600"/>
    </location>
</feature>
<comment type="function">
    <text evidence="2 3 8 9 10 11 12 14">Functions in mitochondrial and peroxisomal division (PubMed:11553726, PubMed:12499366, PubMed:12861026, PubMed:17301055, PubMed:18250306). Mediates membrane fission through oligomerization into membrane-associated tubular structures that wrap around the scission site to constrict and sever the mitochondrial membrane through a GTP hydrolysis-dependent mechanism (PubMed:11553726). The specific recruitment at scission sites is mediated by membrane receptors like MFF, MIEF1 and MIEF2 for mitochondrial membranes (By similarity). While the recruitment by the membrane receptors is GTP-dependent, the following hydrolysis of GTP induces the dissociation from the receptors and allows DNM1L filaments to curl into closed rings that are probably sufficient to sever a double membrane (By similarity). Acts downstream of PINK1 to promote mitochondrial fission in a PRKN-dependent manner. Plays an important role in mitochondrial fission during mitosis (By similarity). Through its function in mitochondrial division, ensures the survival of at least some types of postmitotic neurons, including Purkinje cells, by suppressing oxidative damage (By similarity). Required for normal brain development, including that of cerebellum (By similarity). Facilitates developmentally regulated apoptosis during neural tube formation (By similarity). Required for a normal rate of cytochrome c release and caspase activation during apoptosis; this requirement may depend upon the cell type and the physiological apoptotic cues (By similarity). Required for formation of endocytic vesicles (PubMed:18250306, PubMed:23792689). Proposed to regulate synaptic vesicle membrane dynamics through association with BCL2L1 isoform Bcl-X(L) which stimulates its GTPase activity in synaptic vesicles; the function may require its recruitment by MFF to clathrin-containing vesicles (PubMed:18250306, PubMed:23792689). Required for programmed necrosis execution (By similarity). Rhythmic control of its activity following phosphorylation at Ser-656 is essential for the circadian control of mitochondrial ATP production (By similarity).</text>
</comment>
<comment type="catalytic activity">
    <reaction evidence="2">
        <text>GTP + H2O = GDP + phosphate + H(+)</text>
        <dbReference type="Rhea" id="RHEA:19669"/>
        <dbReference type="ChEBI" id="CHEBI:15377"/>
        <dbReference type="ChEBI" id="CHEBI:15378"/>
        <dbReference type="ChEBI" id="CHEBI:37565"/>
        <dbReference type="ChEBI" id="CHEBI:43474"/>
        <dbReference type="ChEBI" id="CHEBI:58189"/>
        <dbReference type="EC" id="3.6.5.5"/>
    </reaction>
</comment>
<comment type="subunit">
    <text evidence="2 3 7 10 12 14">Homotetramer; dimerizes through the N-terminal GTP-middle region of one molecule binding to the GED domain of another DNM1L molecule. Oligomerizes in a GTP-dependent manner to form membrane-associated tubules with a spiral pattern. Interacts with GSK3B and MARCHF5 (PubMed:10679301). Interacts (via the GTPase and B domains) with UBE2I; the interaction promotes sumoylation of DNM1L, mainly in its B domain. Interacts with PPP3CA; the interaction dephosphorylates DNM1L and regulates its transition to mitochondria. Interacts with BCL2L1 isoform BCL-X(L) and CLTA; DNM1L and BCL2L1 isoform BCL-X(L) may form a complex in synaptic vesicles that also contains clathrin and MFF (PubMed:18250306, PubMed:23792689). Interacts with MFF; the interaction is inhinited by C11orf65/MFI (By similarity). Interacts with FIS1 (PubMed:12861026). Interacts with MIEF2 and MIEF1; GTP-dependent this regulates GTP hydrolysis and DNM1L oligomerization. Interacts with PGAM5; this interaction leads to dephosphorylation at Ser-656 and activation of GTPase activity and eventually to mitochondria fragmentation. Interacts with RALBP1; during mitosis, recruits DNM1L to the mitochondrion and mediates its activation by the mitotic kinase cyclin B-CDK1 (By similarity). Interacts with FUNDC1; this interaction recruits DNM1L/DRP1 at ER-mitochondria contact sites (By similarity).</text>
</comment>
<comment type="interaction">
    <interactant intactId="EBI-1767447">
        <id>O35303</id>
    </interactant>
    <interactant intactId="EBI-287204">
        <id>P53563-1</id>
        <label>Bcl2l1</label>
    </interactant>
    <organismsDiffer>false</organismsDiffer>
    <experiments>4</experiments>
</comment>
<comment type="subcellular location">
    <subcellularLocation>
        <location evidence="10 13">Cytoplasm</location>
        <location evidence="10 13">Cytosol</location>
    </subcellularLocation>
    <subcellularLocation>
        <location evidence="2">Golgi apparatus</location>
    </subcellularLocation>
    <subcellularLocation>
        <location evidence="2">Endomembrane system</location>
        <topology evidence="3">Peripheral membrane protein</topology>
    </subcellularLocation>
    <subcellularLocation>
        <location evidence="10 13">Mitochondrion outer membrane</location>
        <topology evidence="3">Peripheral membrane protein</topology>
    </subcellularLocation>
    <subcellularLocation>
        <location evidence="9">Peroxisome</location>
    </subcellularLocation>
    <subcellularLocation>
        <location evidence="14">Membrane</location>
        <location evidence="14">Clathrin-coated pit</location>
    </subcellularLocation>
    <subcellularLocation>
        <location evidence="14">Cytoplasmic vesicle</location>
        <location evidence="14">Secretory vesicle</location>
        <location evidence="14">Synaptic vesicle membrane</location>
    </subcellularLocation>
    <text evidence="1 3 14">Mainly cytosolic. Recruited by RALA and RALBP1 to mitochondrion during mitosis. Translocated to the mitochondrial membrane through O-GlcNAcylation and interaction with FIS1. Colocalized with MARCHF5 at mitochondrial membrane. Localizes to mitochondria at sites of division. Localizes to mitochondria following necrosis induction. Recruited to the mitochondrial outer membrane by interaction with MIEF1. Mitochondrial recruitment is inhibited by C11orf65/MFI (By similarity). Associated with peroxisomal membranes, partly recruited there by PEX11B. May also be associated with endoplasmic reticulum tubules and cytoplasmic vesicles and found to be perinuclear (PubMed:23792689). In some cell types, localizes to the Golgi complex (By similarity). Binds to phospholipid membranes (By similarity).</text>
</comment>
<comment type="alternative products">
    <event type="alternative splicing"/>
    <isoform>
        <id>O35303-1</id>
        <name>1</name>
        <sequence type="displayed"/>
    </isoform>
    <isoform>
        <id>O35303-2</id>
        <name>2</name>
        <sequence type="described" ref="VSP_013697 VSP_013701"/>
    </isoform>
    <isoform>
        <id>O35303-3</id>
        <name>3</name>
        <name>DLP1-37</name>
        <sequence type="described" ref="VSP_013698 VSP_013699"/>
    </isoform>
    <isoform>
        <id>O35303-4</id>
        <name>4</name>
        <sequence type="described" ref="VSP_013696"/>
    </isoform>
    <isoform>
        <id>O35303-5</id>
        <name>5</name>
        <name>DLP1-11</name>
        <sequence type="described" ref="VSP_013702"/>
    </isoform>
    <isoform>
        <id>O35303-6</id>
        <name>6</name>
        <sequence type="described" ref="VSP_013700"/>
    </isoform>
</comment>
<comment type="tissue specificity">
    <text evidence="7 16">Expressed in all tissues tested (at protein level). Longer isoforms are preferentially expressed in brain.</text>
</comment>
<comment type="induction">
    <text evidence="9">By bezafibrate.</text>
</comment>
<comment type="domain">
    <text evidence="2">The GED domain folds back to interact, in cis, with the GTP-binding domain and middle domain, and interacts, in trans, with the GED domains of other DNM1L molecules, and is thus critical for activating GTPase activity and for DNM1L dimerization.</text>
</comment>
<comment type="PTM">
    <text evidence="2 11">Phosphorylation/dephosphorylation events on two sites near the GED domain regulate mitochondrial fission (By similarity). Phosphorylation on Ser-656 by CAMK1 and PKA inhibits the GTPase activity, leading to a defect in mitochondrial fission promoting mitochondrial elongation (By similarity). Dephosphorylated on this site by PPP3CA which promotes mitochondrial fission (By similarity). Phosphorylation on Ser-635 by PINK1 activates the GTPase activity and promotes mitochondrial fission (By similarity). Phosphorylation on Ser-635 by CDK1 also promotes mitochondrial fission (PubMed:17301055). Phosphorylated in a circadian manner at Ser-656 (By similarity). Dephosphorylated by PGAM5 (By similarity).</text>
</comment>
<comment type="PTM">
    <text evidence="1">Sumoylated on various lysine residues within the B domain, probably by MUL1. Sumoylation positively regulates mitochondrial fission. Desumoylated by SENP5 during G2/M transition of mitosis. Appears to be linked to its catalytic activity (By similarity).</text>
</comment>
<comment type="PTM">
    <text evidence="1">S-nitrosylation increases DNM1L dimerization, mitochondrial fission and causes neuronal damage.</text>
</comment>
<comment type="PTM">
    <text evidence="11">O-GlcNAcylation augments the level of the GTP-bound active form of DNM1L and induces translocation from the cytoplasm to mitochondria in cardiomyocytes. It also decreases phosphorylation at Ser-656.</text>
</comment>
<comment type="PTM">
    <text evidence="2">Ubiquitination by MARCHF5 affects mitochondrial morphology.</text>
</comment>
<comment type="similarity">
    <text evidence="5">Belongs to the TRAFAC class dynamin-like GTPase superfamily. Dynamin/Fzo/YdjA family.</text>
</comment>
<evidence type="ECO:0000250" key="1"/>
<evidence type="ECO:0000250" key="2">
    <source>
        <dbReference type="UniProtKB" id="O00429"/>
    </source>
</evidence>
<evidence type="ECO:0000250" key="3">
    <source>
        <dbReference type="UniProtKB" id="Q8K1M6"/>
    </source>
</evidence>
<evidence type="ECO:0000255" key="4">
    <source>
        <dbReference type="PROSITE-ProRule" id="PRU00720"/>
    </source>
</evidence>
<evidence type="ECO:0000255" key="5">
    <source>
        <dbReference type="PROSITE-ProRule" id="PRU01055"/>
    </source>
</evidence>
<evidence type="ECO:0000256" key="6">
    <source>
        <dbReference type="SAM" id="MobiDB-lite"/>
    </source>
</evidence>
<evidence type="ECO:0000269" key="7">
    <source>
    </source>
</evidence>
<evidence type="ECO:0000269" key="8">
    <source>
    </source>
</evidence>
<evidence type="ECO:0000269" key="9">
    <source>
    </source>
</evidence>
<evidence type="ECO:0000269" key="10">
    <source>
    </source>
</evidence>
<evidence type="ECO:0000269" key="11">
    <source>
    </source>
</evidence>
<evidence type="ECO:0000269" key="12">
    <source>
    </source>
</evidence>
<evidence type="ECO:0000269" key="13">
    <source>
    </source>
</evidence>
<evidence type="ECO:0000269" key="14">
    <source>
    </source>
</evidence>
<evidence type="ECO:0000269" key="15">
    <source>
    </source>
</evidence>
<evidence type="ECO:0000269" key="16">
    <source>
    </source>
</evidence>
<evidence type="ECO:0000303" key="17">
    <source>
    </source>
</evidence>
<evidence type="ECO:0000303" key="18">
    <source>
    </source>
</evidence>
<evidence type="ECO:0000303" key="19">
    <source>
    </source>
</evidence>
<evidence type="ECO:0000303" key="20">
    <source>
    </source>
</evidence>
<evidence type="ECO:0000305" key="21"/>
<evidence type="ECO:0000312" key="22">
    <source>
        <dbReference type="RGD" id="620416"/>
    </source>
</evidence>
<evidence type="ECO:0007744" key="23">
    <source>
    </source>
</evidence>
<name>DNM1L_RAT</name>